<organism>
    <name type="scientific">Carboxydothermus hydrogenoformans (strain ATCC BAA-161 / DSM 6008 / Z-2901)</name>
    <dbReference type="NCBI Taxonomy" id="246194"/>
    <lineage>
        <taxon>Bacteria</taxon>
        <taxon>Bacillati</taxon>
        <taxon>Bacillota</taxon>
        <taxon>Clostridia</taxon>
        <taxon>Thermoanaerobacterales</taxon>
        <taxon>Thermoanaerobacteraceae</taxon>
        <taxon>Carboxydothermus</taxon>
    </lineage>
</organism>
<gene>
    <name evidence="1" type="primary">purL</name>
    <name type="ordered locus">CHY_1074</name>
</gene>
<reference key="1">
    <citation type="journal article" date="2005" name="PLoS Genet.">
        <title>Life in hot carbon monoxide: the complete genome sequence of Carboxydothermus hydrogenoformans Z-2901.</title>
        <authorList>
            <person name="Wu M."/>
            <person name="Ren Q."/>
            <person name="Durkin A.S."/>
            <person name="Daugherty S.C."/>
            <person name="Brinkac L.M."/>
            <person name="Dodson R.J."/>
            <person name="Madupu R."/>
            <person name="Sullivan S.A."/>
            <person name="Kolonay J.F."/>
            <person name="Nelson W.C."/>
            <person name="Tallon L.J."/>
            <person name="Jones K.M."/>
            <person name="Ulrich L.E."/>
            <person name="Gonzalez J.M."/>
            <person name="Zhulin I.B."/>
            <person name="Robb F.T."/>
            <person name="Eisen J.A."/>
        </authorList>
    </citation>
    <scope>NUCLEOTIDE SEQUENCE [LARGE SCALE GENOMIC DNA]</scope>
    <source>
        <strain>ATCC BAA-161 / DSM 6008 / Z-2901</strain>
    </source>
</reference>
<protein>
    <recommendedName>
        <fullName evidence="1">Phosphoribosylformylglycinamidine synthase subunit PurL</fullName>
        <shortName evidence="1">FGAM synthase</shortName>
        <ecNumber evidence="1">6.3.5.3</ecNumber>
    </recommendedName>
    <alternativeName>
        <fullName evidence="1">Formylglycinamide ribonucleotide amidotransferase subunit II</fullName>
        <shortName evidence="1">FGAR amidotransferase II</shortName>
        <shortName evidence="1">FGAR-AT II</shortName>
    </alternativeName>
    <alternativeName>
        <fullName evidence="1">Glutamine amidotransferase PurL</fullName>
    </alternativeName>
    <alternativeName>
        <fullName evidence="1">Phosphoribosylformylglycinamidine synthase subunit II</fullName>
    </alternativeName>
</protein>
<keyword id="KW-0067">ATP-binding</keyword>
<keyword id="KW-0963">Cytoplasm</keyword>
<keyword id="KW-0436">Ligase</keyword>
<keyword id="KW-0460">Magnesium</keyword>
<keyword id="KW-0479">Metal-binding</keyword>
<keyword id="KW-0547">Nucleotide-binding</keyword>
<keyword id="KW-0658">Purine biosynthesis</keyword>
<keyword id="KW-1185">Reference proteome</keyword>
<comment type="function">
    <text evidence="1">Part of the phosphoribosylformylglycinamidine synthase complex involved in the purines biosynthetic pathway. Catalyzes the ATP-dependent conversion of formylglycinamide ribonucleotide (FGAR) and glutamine to yield formylglycinamidine ribonucleotide (FGAM) and glutamate. The FGAM synthase complex is composed of three subunits. PurQ produces an ammonia molecule by converting glutamine to glutamate. PurL transfers the ammonia molecule to FGAR to form FGAM in an ATP-dependent manner. PurS interacts with PurQ and PurL and is thought to assist in the transfer of the ammonia molecule from PurQ to PurL.</text>
</comment>
<comment type="catalytic activity">
    <reaction evidence="1">
        <text>N(2)-formyl-N(1)-(5-phospho-beta-D-ribosyl)glycinamide + L-glutamine + ATP + H2O = 2-formamido-N(1)-(5-O-phospho-beta-D-ribosyl)acetamidine + L-glutamate + ADP + phosphate + H(+)</text>
        <dbReference type="Rhea" id="RHEA:17129"/>
        <dbReference type="ChEBI" id="CHEBI:15377"/>
        <dbReference type="ChEBI" id="CHEBI:15378"/>
        <dbReference type="ChEBI" id="CHEBI:29985"/>
        <dbReference type="ChEBI" id="CHEBI:30616"/>
        <dbReference type="ChEBI" id="CHEBI:43474"/>
        <dbReference type="ChEBI" id="CHEBI:58359"/>
        <dbReference type="ChEBI" id="CHEBI:147286"/>
        <dbReference type="ChEBI" id="CHEBI:147287"/>
        <dbReference type="ChEBI" id="CHEBI:456216"/>
        <dbReference type="EC" id="6.3.5.3"/>
    </reaction>
</comment>
<comment type="pathway">
    <text evidence="1">Purine metabolism; IMP biosynthesis via de novo pathway; 5-amino-1-(5-phospho-D-ribosyl)imidazole from N(2)-formyl-N(1)-(5-phospho-D-ribosyl)glycinamide: step 1/2.</text>
</comment>
<comment type="subunit">
    <text evidence="1">Monomer. Part of the FGAM synthase complex composed of 1 PurL, 1 PurQ and 2 PurS subunits.</text>
</comment>
<comment type="subcellular location">
    <subcellularLocation>
        <location evidence="1">Cytoplasm</location>
    </subcellularLocation>
</comment>
<comment type="similarity">
    <text evidence="1">Belongs to the FGAMS family.</text>
</comment>
<dbReference type="EC" id="6.3.5.3" evidence="1"/>
<dbReference type="EMBL" id="CP000141">
    <property type="protein sequence ID" value="ABB15223.1"/>
    <property type="molecule type" value="Genomic_DNA"/>
</dbReference>
<dbReference type="RefSeq" id="WP_011343996.1">
    <property type="nucleotide sequence ID" value="NC_007503.1"/>
</dbReference>
<dbReference type="SMR" id="Q3AD64"/>
<dbReference type="FunCoup" id="Q3AD64">
    <property type="interactions" value="384"/>
</dbReference>
<dbReference type="STRING" id="246194.CHY_1074"/>
<dbReference type="KEGG" id="chy:CHY_1074"/>
<dbReference type="eggNOG" id="COG0046">
    <property type="taxonomic scope" value="Bacteria"/>
</dbReference>
<dbReference type="HOGENOM" id="CLU_003100_0_1_9"/>
<dbReference type="InParanoid" id="Q3AD64"/>
<dbReference type="OrthoDB" id="9804441at2"/>
<dbReference type="UniPathway" id="UPA00074">
    <property type="reaction ID" value="UER00128"/>
</dbReference>
<dbReference type="Proteomes" id="UP000002706">
    <property type="component" value="Chromosome"/>
</dbReference>
<dbReference type="GO" id="GO:0005737">
    <property type="term" value="C:cytoplasm"/>
    <property type="evidence" value="ECO:0007669"/>
    <property type="project" value="UniProtKB-SubCell"/>
</dbReference>
<dbReference type="GO" id="GO:0005524">
    <property type="term" value="F:ATP binding"/>
    <property type="evidence" value="ECO:0007669"/>
    <property type="project" value="UniProtKB-UniRule"/>
</dbReference>
<dbReference type="GO" id="GO:0000287">
    <property type="term" value="F:magnesium ion binding"/>
    <property type="evidence" value="ECO:0007669"/>
    <property type="project" value="UniProtKB-UniRule"/>
</dbReference>
<dbReference type="GO" id="GO:0004642">
    <property type="term" value="F:phosphoribosylformylglycinamidine synthase activity"/>
    <property type="evidence" value="ECO:0007669"/>
    <property type="project" value="UniProtKB-UniRule"/>
</dbReference>
<dbReference type="GO" id="GO:0006189">
    <property type="term" value="P:'de novo' IMP biosynthetic process"/>
    <property type="evidence" value="ECO:0007669"/>
    <property type="project" value="UniProtKB-UniRule"/>
</dbReference>
<dbReference type="CDD" id="cd02203">
    <property type="entry name" value="PurL_repeat1"/>
    <property type="match status" value="1"/>
</dbReference>
<dbReference type="CDD" id="cd02204">
    <property type="entry name" value="PurL_repeat2"/>
    <property type="match status" value="1"/>
</dbReference>
<dbReference type="FunFam" id="3.30.1330.10:FF:000004">
    <property type="entry name" value="Phosphoribosylformylglycinamidine synthase subunit PurL"/>
    <property type="match status" value="1"/>
</dbReference>
<dbReference type="FunFam" id="3.90.650.10:FF:000009">
    <property type="entry name" value="Phosphoribosylformylglycinamidine synthase subunit PurL"/>
    <property type="match status" value="1"/>
</dbReference>
<dbReference type="Gene3D" id="3.90.650.10">
    <property type="entry name" value="PurM-like C-terminal domain"/>
    <property type="match status" value="2"/>
</dbReference>
<dbReference type="Gene3D" id="3.30.1330.10">
    <property type="entry name" value="PurM-like, N-terminal domain"/>
    <property type="match status" value="2"/>
</dbReference>
<dbReference type="HAMAP" id="MF_00420">
    <property type="entry name" value="PurL_2"/>
    <property type="match status" value="1"/>
</dbReference>
<dbReference type="InterPro" id="IPR010074">
    <property type="entry name" value="PRibForGlyAmidine_synth_PurL"/>
</dbReference>
<dbReference type="InterPro" id="IPR041609">
    <property type="entry name" value="PurL_linker"/>
</dbReference>
<dbReference type="InterPro" id="IPR010918">
    <property type="entry name" value="PurM-like_C_dom"/>
</dbReference>
<dbReference type="InterPro" id="IPR036676">
    <property type="entry name" value="PurM-like_C_sf"/>
</dbReference>
<dbReference type="InterPro" id="IPR016188">
    <property type="entry name" value="PurM-like_N"/>
</dbReference>
<dbReference type="InterPro" id="IPR036921">
    <property type="entry name" value="PurM-like_N_sf"/>
</dbReference>
<dbReference type="NCBIfam" id="TIGR01736">
    <property type="entry name" value="FGAM_synth_II"/>
    <property type="match status" value="1"/>
</dbReference>
<dbReference type="NCBIfam" id="NF002290">
    <property type="entry name" value="PRK01213.1"/>
    <property type="match status" value="1"/>
</dbReference>
<dbReference type="PANTHER" id="PTHR43555">
    <property type="entry name" value="PHOSPHORIBOSYLFORMYLGLYCINAMIDINE SYNTHASE SUBUNIT PURL"/>
    <property type="match status" value="1"/>
</dbReference>
<dbReference type="PANTHER" id="PTHR43555:SF1">
    <property type="entry name" value="PHOSPHORIBOSYLFORMYLGLYCINAMIDINE SYNTHASE SUBUNIT PURL"/>
    <property type="match status" value="1"/>
</dbReference>
<dbReference type="Pfam" id="PF00586">
    <property type="entry name" value="AIRS"/>
    <property type="match status" value="2"/>
</dbReference>
<dbReference type="Pfam" id="PF02769">
    <property type="entry name" value="AIRS_C"/>
    <property type="match status" value="2"/>
</dbReference>
<dbReference type="Pfam" id="PF18072">
    <property type="entry name" value="FGAR-AT_linker"/>
    <property type="match status" value="1"/>
</dbReference>
<dbReference type="PIRSF" id="PIRSF001587">
    <property type="entry name" value="FGAM_synthase_II"/>
    <property type="match status" value="1"/>
</dbReference>
<dbReference type="SUPFAM" id="SSF56042">
    <property type="entry name" value="PurM C-terminal domain-like"/>
    <property type="match status" value="2"/>
</dbReference>
<dbReference type="SUPFAM" id="SSF55326">
    <property type="entry name" value="PurM N-terminal domain-like"/>
    <property type="match status" value="2"/>
</dbReference>
<evidence type="ECO:0000255" key="1">
    <source>
        <dbReference type="HAMAP-Rule" id="MF_00420"/>
    </source>
</evidence>
<feature type="chain" id="PRO_0000236650" description="Phosphoribosylformylglycinamidine synthase subunit PurL">
    <location>
        <begin position="1"/>
        <end position="728"/>
    </location>
</feature>
<feature type="active site" evidence="1">
    <location>
        <position position="40"/>
    </location>
</feature>
<feature type="active site" description="Proton acceptor" evidence="1">
    <location>
        <position position="86"/>
    </location>
</feature>
<feature type="binding site" evidence="1">
    <location>
        <position position="43"/>
    </location>
    <ligand>
        <name>ATP</name>
        <dbReference type="ChEBI" id="CHEBI:30616"/>
    </ligand>
</feature>
<feature type="binding site" evidence="1">
    <location>
        <position position="82"/>
    </location>
    <ligand>
        <name>ATP</name>
        <dbReference type="ChEBI" id="CHEBI:30616"/>
    </ligand>
</feature>
<feature type="binding site" evidence="1">
    <location>
        <position position="84"/>
    </location>
    <ligand>
        <name>Mg(2+)</name>
        <dbReference type="ChEBI" id="CHEBI:18420"/>
        <label>1</label>
    </ligand>
</feature>
<feature type="binding site" evidence="1">
    <location>
        <begin position="85"/>
        <end position="88"/>
    </location>
    <ligand>
        <name>substrate</name>
    </ligand>
</feature>
<feature type="binding site" evidence="1">
    <location>
        <position position="107"/>
    </location>
    <ligand>
        <name>substrate</name>
    </ligand>
</feature>
<feature type="binding site" evidence="1">
    <location>
        <position position="108"/>
    </location>
    <ligand>
        <name>Mg(2+)</name>
        <dbReference type="ChEBI" id="CHEBI:18420"/>
        <label>2</label>
    </ligand>
</feature>
<feature type="binding site" evidence="1">
    <location>
        <position position="231"/>
    </location>
    <ligand>
        <name>substrate</name>
    </ligand>
</feature>
<feature type="binding site" evidence="1">
    <location>
        <position position="259"/>
    </location>
    <ligand>
        <name>Mg(2+)</name>
        <dbReference type="ChEBI" id="CHEBI:18420"/>
        <label>2</label>
    </ligand>
</feature>
<feature type="binding site" evidence="1">
    <location>
        <begin position="303"/>
        <end position="305"/>
    </location>
    <ligand>
        <name>substrate</name>
    </ligand>
</feature>
<feature type="binding site" evidence="1">
    <location>
        <position position="483"/>
    </location>
    <ligand>
        <name>ATP</name>
        <dbReference type="ChEBI" id="CHEBI:30616"/>
    </ligand>
</feature>
<feature type="binding site" evidence="1">
    <location>
        <position position="520"/>
    </location>
    <ligand>
        <name>ATP</name>
        <dbReference type="ChEBI" id="CHEBI:30616"/>
    </ligand>
</feature>
<feature type="binding site" evidence="1">
    <location>
        <position position="521"/>
    </location>
    <ligand>
        <name>Mg(2+)</name>
        <dbReference type="ChEBI" id="CHEBI:18420"/>
        <label>1</label>
    </ligand>
</feature>
<feature type="binding site" evidence="1">
    <location>
        <position position="523"/>
    </location>
    <ligand>
        <name>substrate</name>
    </ligand>
</feature>
<accession>Q3AD64</accession>
<sequence length="728" mass="79119">MAKWREMGLTDEEYRRIVEYLGREPNEVELGMCAVMWSEHCSYKSSKIHLKKLPTRGPAVVQGPGENAGVVDIGDGLGIAFKIESHNHPSAIEPYQGAATGVGGIIRDIFAMGARPIALLDSLRFGKLHSPRVRHLFTGVVAGIAGYGNCIGIPTVAGDVYFQESYEENPLVNAMCVGIVELSKLKKGVATGVGNPVLLVGATTGRDGIHGATFASEELSQDGEDKRPSVQVGDPFMEKLLLEACLEALEYGHIVGMQDLGAAGLTSSSSEMAARGKSGIRLYLDRVPLREEGMTPYEIMLSESQERMLLVVEKGYEDEIIKIFKKWDLNAVVVGEITDGEEIEVFFDGECVAKLPYRLLTEEAPVYDRPYRIPEIKNLQSINPAGVDCGEALRRLLQSPNIARKSYVYEQYDHQVGVNTVVKPGYSDAAVLRIKGTKKGIAVKTDGNGRYVYHNPREGAKRAVLETALNLAVTGAKPLGLTNCLNFGNPEKPEIMGQFVEVIAGMKEACEILNIPVTGGNVSFYNETGEKAIYPTPVIGMVGLIDDLETGLIPMAFQTEGDLIYLLGEPTGELGQSEFLKEFFGDVLVPVPPVDLQEGRRIIELLPLLKKQGLINSAHDVSDGGLAVSLCEAAFAGELGVNIDFTTSLLPQEFLFSEKVGLVIVSVSPEKEEEFIKSVKNAGVFVLKLGRVNGKDEIEICLNGQRVIQEKLSELKALYEGGLSWALK</sequence>
<proteinExistence type="inferred from homology"/>
<name>PURL_CARHZ</name>